<reference key="1">
    <citation type="journal article" date="2000" name="Biochim. Biophys. Acta">
        <title>BSPRY, a novel protein of the Ro-Ret family.</title>
        <authorList>
            <person name="Schenker T."/>
            <person name="Trueb B."/>
        </authorList>
    </citation>
    <scope>NUCLEOTIDE SEQUENCE [MRNA] (ISOFORM 1)</scope>
    <scope>VARIANT ILE-374</scope>
    <source>
        <tissue>Placenta</tissue>
    </source>
</reference>
<reference key="2">
    <citation type="journal article" date="2004" name="Nature">
        <title>DNA sequence and analysis of human chromosome 9.</title>
        <authorList>
            <person name="Humphray S.J."/>
            <person name="Oliver K."/>
            <person name="Hunt A.R."/>
            <person name="Plumb R.W."/>
            <person name="Loveland J.E."/>
            <person name="Howe K.L."/>
            <person name="Andrews T.D."/>
            <person name="Searle S."/>
            <person name="Hunt S.E."/>
            <person name="Scott C.E."/>
            <person name="Jones M.C."/>
            <person name="Ainscough R."/>
            <person name="Almeida J.P."/>
            <person name="Ambrose K.D."/>
            <person name="Ashwell R.I.S."/>
            <person name="Babbage A.K."/>
            <person name="Babbage S."/>
            <person name="Bagguley C.L."/>
            <person name="Bailey J."/>
            <person name="Banerjee R."/>
            <person name="Barker D.J."/>
            <person name="Barlow K.F."/>
            <person name="Bates K."/>
            <person name="Beasley H."/>
            <person name="Beasley O."/>
            <person name="Bird C.P."/>
            <person name="Bray-Allen S."/>
            <person name="Brown A.J."/>
            <person name="Brown J.Y."/>
            <person name="Burford D."/>
            <person name="Burrill W."/>
            <person name="Burton J."/>
            <person name="Carder C."/>
            <person name="Carter N.P."/>
            <person name="Chapman J.C."/>
            <person name="Chen Y."/>
            <person name="Clarke G."/>
            <person name="Clark S.Y."/>
            <person name="Clee C.M."/>
            <person name="Clegg S."/>
            <person name="Collier R.E."/>
            <person name="Corby N."/>
            <person name="Crosier M."/>
            <person name="Cummings A.T."/>
            <person name="Davies J."/>
            <person name="Dhami P."/>
            <person name="Dunn M."/>
            <person name="Dutta I."/>
            <person name="Dyer L.W."/>
            <person name="Earthrowl M.E."/>
            <person name="Faulkner L."/>
            <person name="Fleming C.J."/>
            <person name="Frankish A."/>
            <person name="Frankland J.A."/>
            <person name="French L."/>
            <person name="Fricker D.G."/>
            <person name="Garner P."/>
            <person name="Garnett J."/>
            <person name="Ghori J."/>
            <person name="Gilbert J.G.R."/>
            <person name="Glison C."/>
            <person name="Grafham D.V."/>
            <person name="Gribble S."/>
            <person name="Griffiths C."/>
            <person name="Griffiths-Jones S."/>
            <person name="Grocock R."/>
            <person name="Guy J."/>
            <person name="Hall R.E."/>
            <person name="Hammond S."/>
            <person name="Harley J.L."/>
            <person name="Harrison E.S.I."/>
            <person name="Hart E.A."/>
            <person name="Heath P.D."/>
            <person name="Henderson C.D."/>
            <person name="Hopkins B.L."/>
            <person name="Howard P.J."/>
            <person name="Howden P.J."/>
            <person name="Huckle E."/>
            <person name="Johnson C."/>
            <person name="Johnson D."/>
            <person name="Joy A.A."/>
            <person name="Kay M."/>
            <person name="Keenan S."/>
            <person name="Kershaw J.K."/>
            <person name="Kimberley A.M."/>
            <person name="King A."/>
            <person name="Knights A."/>
            <person name="Laird G.K."/>
            <person name="Langford C."/>
            <person name="Lawlor S."/>
            <person name="Leongamornlert D.A."/>
            <person name="Leversha M."/>
            <person name="Lloyd C."/>
            <person name="Lloyd D.M."/>
            <person name="Lovell J."/>
            <person name="Martin S."/>
            <person name="Mashreghi-Mohammadi M."/>
            <person name="Matthews L."/>
            <person name="McLaren S."/>
            <person name="McLay K.E."/>
            <person name="McMurray A."/>
            <person name="Milne S."/>
            <person name="Nickerson T."/>
            <person name="Nisbett J."/>
            <person name="Nordsiek G."/>
            <person name="Pearce A.V."/>
            <person name="Peck A.I."/>
            <person name="Porter K.M."/>
            <person name="Pandian R."/>
            <person name="Pelan S."/>
            <person name="Phillimore B."/>
            <person name="Povey S."/>
            <person name="Ramsey Y."/>
            <person name="Rand V."/>
            <person name="Scharfe M."/>
            <person name="Sehra H.K."/>
            <person name="Shownkeen R."/>
            <person name="Sims S.K."/>
            <person name="Skuce C.D."/>
            <person name="Smith M."/>
            <person name="Steward C.A."/>
            <person name="Swarbreck D."/>
            <person name="Sycamore N."/>
            <person name="Tester J."/>
            <person name="Thorpe A."/>
            <person name="Tracey A."/>
            <person name="Tromans A."/>
            <person name="Thomas D.W."/>
            <person name="Wall M."/>
            <person name="Wallis J.M."/>
            <person name="West A.P."/>
            <person name="Whitehead S.L."/>
            <person name="Willey D.L."/>
            <person name="Williams S.A."/>
            <person name="Wilming L."/>
            <person name="Wray P.W."/>
            <person name="Young L."/>
            <person name="Ashurst J.L."/>
            <person name="Coulson A."/>
            <person name="Blocker H."/>
            <person name="Durbin R.M."/>
            <person name="Sulston J.E."/>
            <person name="Hubbard T."/>
            <person name="Jackson M.J."/>
            <person name="Bentley D.R."/>
            <person name="Beck S."/>
            <person name="Rogers J."/>
            <person name="Dunham I."/>
        </authorList>
    </citation>
    <scope>NUCLEOTIDE SEQUENCE [LARGE SCALE GENOMIC DNA]</scope>
</reference>
<reference key="3">
    <citation type="submission" date="2005-07" db="EMBL/GenBank/DDBJ databases">
        <authorList>
            <person name="Mural R.J."/>
            <person name="Istrail S."/>
            <person name="Sutton G.G."/>
            <person name="Florea L."/>
            <person name="Halpern A.L."/>
            <person name="Mobarry C.M."/>
            <person name="Lippert R."/>
            <person name="Walenz B."/>
            <person name="Shatkay H."/>
            <person name="Dew I."/>
            <person name="Miller J.R."/>
            <person name="Flanigan M.J."/>
            <person name="Edwards N.J."/>
            <person name="Bolanos R."/>
            <person name="Fasulo D."/>
            <person name="Halldorsson B.V."/>
            <person name="Hannenhalli S."/>
            <person name="Turner R."/>
            <person name="Yooseph S."/>
            <person name="Lu F."/>
            <person name="Nusskern D.R."/>
            <person name="Shue B.C."/>
            <person name="Zheng X.H."/>
            <person name="Zhong F."/>
            <person name="Delcher A.L."/>
            <person name="Huson D.H."/>
            <person name="Kravitz S.A."/>
            <person name="Mouchard L."/>
            <person name="Reinert K."/>
            <person name="Remington K.A."/>
            <person name="Clark A.G."/>
            <person name="Waterman M.S."/>
            <person name="Eichler E.E."/>
            <person name="Adams M.D."/>
            <person name="Hunkapiller M.W."/>
            <person name="Myers E.W."/>
            <person name="Venter J.C."/>
        </authorList>
    </citation>
    <scope>NUCLEOTIDE SEQUENCE [LARGE SCALE GENOMIC DNA]</scope>
</reference>
<reference key="4">
    <citation type="journal article" date="2004" name="Genome Res.">
        <title>The status, quality, and expansion of the NIH full-length cDNA project: the Mammalian Gene Collection (MGC).</title>
        <authorList>
            <consortium name="The MGC Project Team"/>
        </authorList>
    </citation>
    <scope>NUCLEOTIDE SEQUENCE [LARGE SCALE MRNA] (ISOFORM 2)</scope>
    <source>
        <tissue>Colon</tissue>
    </source>
</reference>
<reference key="5">
    <citation type="journal article" date="2004" name="Nat. Genet.">
        <title>Complete sequencing and characterization of 21,243 full-length human cDNAs.</title>
        <authorList>
            <person name="Ota T."/>
            <person name="Suzuki Y."/>
            <person name="Nishikawa T."/>
            <person name="Otsuki T."/>
            <person name="Sugiyama T."/>
            <person name="Irie R."/>
            <person name="Wakamatsu A."/>
            <person name="Hayashi K."/>
            <person name="Sato H."/>
            <person name="Nagai K."/>
            <person name="Kimura K."/>
            <person name="Makita H."/>
            <person name="Sekine M."/>
            <person name="Obayashi M."/>
            <person name="Nishi T."/>
            <person name="Shibahara T."/>
            <person name="Tanaka T."/>
            <person name="Ishii S."/>
            <person name="Yamamoto J."/>
            <person name="Saito K."/>
            <person name="Kawai Y."/>
            <person name="Isono Y."/>
            <person name="Nakamura Y."/>
            <person name="Nagahari K."/>
            <person name="Murakami K."/>
            <person name="Yasuda T."/>
            <person name="Iwayanagi T."/>
            <person name="Wagatsuma M."/>
            <person name="Shiratori A."/>
            <person name="Sudo H."/>
            <person name="Hosoiri T."/>
            <person name="Kaku Y."/>
            <person name="Kodaira H."/>
            <person name="Kondo H."/>
            <person name="Sugawara M."/>
            <person name="Takahashi M."/>
            <person name="Kanda K."/>
            <person name="Yokoi T."/>
            <person name="Furuya T."/>
            <person name="Kikkawa E."/>
            <person name="Omura Y."/>
            <person name="Abe K."/>
            <person name="Kamihara K."/>
            <person name="Katsuta N."/>
            <person name="Sato K."/>
            <person name="Tanikawa M."/>
            <person name="Yamazaki M."/>
            <person name="Ninomiya K."/>
            <person name="Ishibashi T."/>
            <person name="Yamashita H."/>
            <person name="Murakawa K."/>
            <person name="Fujimori K."/>
            <person name="Tanai H."/>
            <person name="Kimata M."/>
            <person name="Watanabe M."/>
            <person name="Hiraoka S."/>
            <person name="Chiba Y."/>
            <person name="Ishida S."/>
            <person name="Ono Y."/>
            <person name="Takiguchi S."/>
            <person name="Watanabe S."/>
            <person name="Yosida M."/>
            <person name="Hotuta T."/>
            <person name="Kusano J."/>
            <person name="Kanehori K."/>
            <person name="Takahashi-Fujii A."/>
            <person name="Hara H."/>
            <person name="Tanase T.-O."/>
            <person name="Nomura Y."/>
            <person name="Togiya S."/>
            <person name="Komai F."/>
            <person name="Hara R."/>
            <person name="Takeuchi K."/>
            <person name="Arita M."/>
            <person name="Imose N."/>
            <person name="Musashino K."/>
            <person name="Yuuki H."/>
            <person name="Oshima A."/>
            <person name="Sasaki N."/>
            <person name="Aotsuka S."/>
            <person name="Yoshikawa Y."/>
            <person name="Matsunawa H."/>
            <person name="Ichihara T."/>
            <person name="Shiohata N."/>
            <person name="Sano S."/>
            <person name="Moriya S."/>
            <person name="Momiyama H."/>
            <person name="Satoh N."/>
            <person name="Takami S."/>
            <person name="Terashima Y."/>
            <person name="Suzuki O."/>
            <person name="Nakagawa S."/>
            <person name="Senoh A."/>
            <person name="Mizoguchi H."/>
            <person name="Goto Y."/>
            <person name="Shimizu F."/>
            <person name="Wakebe H."/>
            <person name="Hishigaki H."/>
            <person name="Watanabe T."/>
            <person name="Sugiyama A."/>
            <person name="Takemoto M."/>
            <person name="Kawakami B."/>
            <person name="Yamazaki M."/>
            <person name="Watanabe K."/>
            <person name="Kumagai A."/>
            <person name="Itakura S."/>
            <person name="Fukuzumi Y."/>
            <person name="Fujimori Y."/>
            <person name="Komiyama M."/>
            <person name="Tashiro H."/>
            <person name="Tanigami A."/>
            <person name="Fujiwara T."/>
            <person name="Ono T."/>
            <person name="Yamada K."/>
            <person name="Fujii Y."/>
            <person name="Ozaki K."/>
            <person name="Hirao M."/>
            <person name="Ohmori Y."/>
            <person name="Kawabata A."/>
            <person name="Hikiji T."/>
            <person name="Kobatake N."/>
            <person name="Inagaki H."/>
            <person name="Ikema Y."/>
            <person name="Okamoto S."/>
            <person name="Okitani R."/>
            <person name="Kawakami T."/>
            <person name="Noguchi S."/>
            <person name="Itoh T."/>
            <person name="Shigeta K."/>
            <person name="Senba T."/>
            <person name="Matsumura K."/>
            <person name="Nakajima Y."/>
            <person name="Mizuno T."/>
            <person name="Morinaga M."/>
            <person name="Sasaki M."/>
            <person name="Togashi T."/>
            <person name="Oyama M."/>
            <person name="Hata H."/>
            <person name="Watanabe M."/>
            <person name="Komatsu T."/>
            <person name="Mizushima-Sugano J."/>
            <person name="Satoh T."/>
            <person name="Shirai Y."/>
            <person name="Takahashi Y."/>
            <person name="Nakagawa K."/>
            <person name="Okumura K."/>
            <person name="Nagase T."/>
            <person name="Nomura N."/>
            <person name="Kikuchi H."/>
            <person name="Masuho Y."/>
            <person name="Yamashita R."/>
            <person name="Nakai K."/>
            <person name="Yada T."/>
            <person name="Nakamura Y."/>
            <person name="Ohara O."/>
            <person name="Isogai T."/>
            <person name="Sugano S."/>
        </authorList>
    </citation>
    <scope>NUCLEOTIDE SEQUENCE [LARGE SCALE MRNA] (ISOFORM 1)</scope>
    <scope>VARIANT ILE-374</scope>
    <source>
        <tissue>Colon</tissue>
        <tissue>Prostate</tissue>
    </source>
</reference>
<comment type="function">
    <text evidence="1">May regulate epithelial calcium transport by inhibiting TRPV5 activity.</text>
</comment>
<comment type="subunit">
    <text evidence="1">Interacts with TRPV5 and TRPV6. Interacts with YWHAZ/14-3-3 protein zeta (By similarity).</text>
</comment>
<comment type="subcellular location">
    <subcellularLocation>
        <location>Cytoplasm</location>
    </subcellularLocation>
    <subcellularLocation>
        <location evidence="1">Membrane</location>
        <topology evidence="1">Peripheral membrane protein</topology>
    </subcellularLocation>
</comment>
<comment type="alternative products">
    <event type="alternative splicing"/>
    <isoform>
        <id>Q5W0U4-1</id>
        <name>1</name>
        <sequence type="displayed"/>
    </isoform>
    <isoform>
        <id>Q5W0U4-2</id>
        <name>2</name>
        <sequence type="described" ref="VSP_019527 VSP_019528"/>
    </isoform>
</comment>
<comment type="sequence caution" evidence="7">
    <conflict type="erroneous initiation">
        <sequence resource="EMBL-CDS" id="BAA90980"/>
    </conflict>
</comment>
<dbReference type="EMBL" id="AJ276691">
    <property type="protein sequence ID" value="CAC09324.1"/>
    <property type="molecule type" value="mRNA"/>
</dbReference>
<dbReference type="EMBL" id="AL137066">
    <property type="status" value="NOT_ANNOTATED_CDS"/>
    <property type="molecule type" value="Genomic_DNA"/>
</dbReference>
<dbReference type="EMBL" id="CH471090">
    <property type="protein sequence ID" value="EAW87374.1"/>
    <property type="molecule type" value="Genomic_DNA"/>
</dbReference>
<dbReference type="EMBL" id="BC001477">
    <property type="protein sequence ID" value="AAH01477.1"/>
    <property type="molecule type" value="mRNA"/>
</dbReference>
<dbReference type="EMBL" id="AK000157">
    <property type="protein sequence ID" value="BAA90980.1"/>
    <property type="status" value="ALT_INIT"/>
    <property type="molecule type" value="mRNA"/>
</dbReference>
<dbReference type="EMBL" id="AK092607">
    <property type="protein sequence ID" value="BAG52581.1"/>
    <property type="molecule type" value="mRNA"/>
</dbReference>
<dbReference type="CCDS" id="CCDS43868.1">
    <molecule id="Q5W0U4-1"/>
</dbReference>
<dbReference type="RefSeq" id="NP_001304872.1">
    <property type="nucleotide sequence ID" value="NM_001317943.1"/>
</dbReference>
<dbReference type="RefSeq" id="NP_001304873.1">
    <molecule id="Q5W0U4-2"/>
    <property type="nucleotide sequence ID" value="NM_001317944.2"/>
</dbReference>
<dbReference type="RefSeq" id="NP_060158.2">
    <molecule id="Q5W0U4-1"/>
    <property type="nucleotide sequence ID" value="NM_017688.3"/>
</dbReference>
<dbReference type="SMR" id="Q5W0U4"/>
<dbReference type="BioGRID" id="120188">
    <property type="interactions" value="36"/>
</dbReference>
<dbReference type="FunCoup" id="Q5W0U4">
    <property type="interactions" value="456"/>
</dbReference>
<dbReference type="IntAct" id="Q5W0U4">
    <property type="interactions" value="35"/>
</dbReference>
<dbReference type="MINT" id="Q5W0U4"/>
<dbReference type="STRING" id="9606.ENSP00000363298"/>
<dbReference type="iPTMnet" id="Q5W0U4"/>
<dbReference type="PhosphoSitePlus" id="Q5W0U4"/>
<dbReference type="BioMuta" id="BSPRY"/>
<dbReference type="DMDM" id="74747982"/>
<dbReference type="jPOST" id="Q5W0U4"/>
<dbReference type="MassIVE" id="Q5W0U4"/>
<dbReference type="PaxDb" id="9606-ENSP00000363298"/>
<dbReference type="PeptideAtlas" id="Q5W0U4"/>
<dbReference type="ProteomicsDB" id="65776">
    <molecule id="Q5W0U4-1"/>
</dbReference>
<dbReference type="ProteomicsDB" id="65777">
    <molecule id="Q5W0U4-2"/>
</dbReference>
<dbReference type="Pumba" id="Q5W0U4"/>
<dbReference type="Antibodypedia" id="29777">
    <property type="antibodies" value="50 antibodies from 12 providers"/>
</dbReference>
<dbReference type="DNASU" id="54836"/>
<dbReference type="Ensembl" id="ENST00000374183.5">
    <molecule id="Q5W0U4-1"/>
    <property type="protein sequence ID" value="ENSP00000363298.4"/>
    <property type="gene ID" value="ENSG00000119411.11"/>
</dbReference>
<dbReference type="GeneID" id="54836"/>
<dbReference type="KEGG" id="hsa:54836"/>
<dbReference type="MANE-Select" id="ENST00000374183.5">
    <property type="protein sequence ID" value="ENSP00000363298.4"/>
    <property type="RefSeq nucleotide sequence ID" value="NM_017688.3"/>
    <property type="RefSeq protein sequence ID" value="NP_060158.2"/>
</dbReference>
<dbReference type="UCSC" id="uc004bhg.5">
    <molecule id="Q5W0U4-1"/>
    <property type="organism name" value="human"/>
</dbReference>
<dbReference type="AGR" id="HGNC:18232"/>
<dbReference type="CTD" id="54836"/>
<dbReference type="GeneCards" id="BSPRY"/>
<dbReference type="HGNC" id="HGNC:18232">
    <property type="gene designation" value="BSPRY"/>
</dbReference>
<dbReference type="HPA" id="ENSG00000119411">
    <property type="expression patterns" value="Tissue enriched (parathyroid)"/>
</dbReference>
<dbReference type="MIM" id="619683">
    <property type="type" value="gene"/>
</dbReference>
<dbReference type="neXtProt" id="NX_Q5W0U4"/>
<dbReference type="OpenTargets" id="ENSG00000119411"/>
<dbReference type="PharmGKB" id="PA134979106"/>
<dbReference type="VEuPathDB" id="HostDB:ENSG00000119411"/>
<dbReference type="eggNOG" id="KOG2177">
    <property type="taxonomic scope" value="Eukaryota"/>
</dbReference>
<dbReference type="GeneTree" id="ENSGT00940000161096"/>
<dbReference type="HOGENOM" id="CLU_050384_0_0_1"/>
<dbReference type="InParanoid" id="Q5W0U4"/>
<dbReference type="OMA" id="NEARLGH"/>
<dbReference type="OrthoDB" id="9875313at2759"/>
<dbReference type="PAN-GO" id="Q5W0U4">
    <property type="GO annotations" value="3 GO annotations based on evolutionary models"/>
</dbReference>
<dbReference type="PhylomeDB" id="Q5W0U4"/>
<dbReference type="TreeFam" id="TF351014"/>
<dbReference type="PathwayCommons" id="Q5W0U4"/>
<dbReference type="SignaLink" id="Q5W0U4"/>
<dbReference type="BioGRID-ORCS" id="54836">
    <property type="hits" value="19 hits in 1145 CRISPR screens"/>
</dbReference>
<dbReference type="ChiTaRS" id="BSPRY">
    <property type="organism name" value="human"/>
</dbReference>
<dbReference type="GenomeRNAi" id="54836"/>
<dbReference type="Pharos" id="Q5W0U4">
    <property type="development level" value="Tdark"/>
</dbReference>
<dbReference type="PRO" id="PR:Q5W0U4"/>
<dbReference type="Proteomes" id="UP000005640">
    <property type="component" value="Chromosome 9"/>
</dbReference>
<dbReference type="RNAct" id="Q5W0U4">
    <property type="molecule type" value="protein"/>
</dbReference>
<dbReference type="Bgee" id="ENSG00000119411">
    <property type="expression patterns" value="Expressed in parotid gland and 155 other cell types or tissues"/>
</dbReference>
<dbReference type="GO" id="GO:0005737">
    <property type="term" value="C:cytoplasm"/>
    <property type="evidence" value="ECO:0000318"/>
    <property type="project" value="GO_Central"/>
</dbReference>
<dbReference type="GO" id="GO:0016020">
    <property type="term" value="C:membrane"/>
    <property type="evidence" value="ECO:0007669"/>
    <property type="project" value="UniProtKB-SubCell"/>
</dbReference>
<dbReference type="GO" id="GO:0061630">
    <property type="term" value="F:ubiquitin protein ligase activity"/>
    <property type="evidence" value="ECO:0000318"/>
    <property type="project" value="GO_Central"/>
</dbReference>
<dbReference type="GO" id="GO:0008270">
    <property type="term" value="F:zinc ion binding"/>
    <property type="evidence" value="ECO:0007669"/>
    <property type="project" value="UniProtKB-KW"/>
</dbReference>
<dbReference type="GO" id="GO:0006816">
    <property type="term" value="P:calcium ion transport"/>
    <property type="evidence" value="ECO:0007669"/>
    <property type="project" value="UniProtKB-KW"/>
</dbReference>
<dbReference type="GO" id="GO:1990830">
    <property type="term" value="P:cellular response to leukemia inhibitory factor"/>
    <property type="evidence" value="ECO:0007669"/>
    <property type="project" value="Ensembl"/>
</dbReference>
<dbReference type="GO" id="GO:0045087">
    <property type="term" value="P:innate immune response"/>
    <property type="evidence" value="ECO:0000318"/>
    <property type="project" value="GO_Central"/>
</dbReference>
<dbReference type="CDD" id="cd19834">
    <property type="entry name" value="Bbox2_BSPRY"/>
    <property type="match status" value="1"/>
</dbReference>
<dbReference type="CDD" id="cd12904">
    <property type="entry name" value="SPRY_BSPRY"/>
    <property type="match status" value="1"/>
</dbReference>
<dbReference type="Gene3D" id="2.60.120.920">
    <property type="match status" value="1"/>
</dbReference>
<dbReference type="Gene3D" id="3.30.160.60">
    <property type="entry name" value="Classic Zinc Finger"/>
    <property type="match status" value="1"/>
</dbReference>
<dbReference type="InterPro" id="IPR001870">
    <property type="entry name" value="B30.2/SPRY"/>
</dbReference>
<dbReference type="InterPro" id="IPR043136">
    <property type="entry name" value="B30.2/SPRY_sf"/>
</dbReference>
<dbReference type="InterPro" id="IPR003879">
    <property type="entry name" value="Butyrophylin_SPRY"/>
</dbReference>
<dbReference type="InterPro" id="IPR013320">
    <property type="entry name" value="ConA-like_dom_sf"/>
</dbReference>
<dbReference type="InterPro" id="IPR006574">
    <property type="entry name" value="PRY"/>
</dbReference>
<dbReference type="InterPro" id="IPR003877">
    <property type="entry name" value="SPRY_dom"/>
</dbReference>
<dbReference type="InterPro" id="IPR050143">
    <property type="entry name" value="TRIM/RBCC"/>
</dbReference>
<dbReference type="PANTHER" id="PTHR24103">
    <property type="entry name" value="E3 UBIQUITIN-PROTEIN LIGASE TRIM"/>
    <property type="match status" value="1"/>
</dbReference>
<dbReference type="Pfam" id="PF13765">
    <property type="entry name" value="PRY"/>
    <property type="match status" value="1"/>
</dbReference>
<dbReference type="Pfam" id="PF00622">
    <property type="entry name" value="SPRY"/>
    <property type="match status" value="1"/>
</dbReference>
<dbReference type="PRINTS" id="PR01407">
    <property type="entry name" value="BUTYPHLNCDUF"/>
</dbReference>
<dbReference type="SMART" id="SM00589">
    <property type="entry name" value="PRY"/>
    <property type="match status" value="1"/>
</dbReference>
<dbReference type="SMART" id="SM00449">
    <property type="entry name" value="SPRY"/>
    <property type="match status" value="1"/>
</dbReference>
<dbReference type="SUPFAM" id="SSF57845">
    <property type="entry name" value="B-box zinc-binding domain"/>
    <property type="match status" value="1"/>
</dbReference>
<dbReference type="SUPFAM" id="SSF49899">
    <property type="entry name" value="Concanavalin A-like lectins/glucanases"/>
    <property type="match status" value="1"/>
</dbReference>
<dbReference type="PROSITE" id="PS50188">
    <property type="entry name" value="B302_SPRY"/>
    <property type="match status" value="1"/>
</dbReference>
<keyword id="KW-0025">Alternative splicing</keyword>
<keyword id="KW-0106">Calcium</keyword>
<keyword id="KW-0109">Calcium transport</keyword>
<keyword id="KW-0963">Cytoplasm</keyword>
<keyword id="KW-0406">Ion transport</keyword>
<keyword id="KW-0472">Membrane</keyword>
<keyword id="KW-0479">Metal-binding</keyword>
<keyword id="KW-1267">Proteomics identification</keyword>
<keyword id="KW-1185">Reference proteome</keyword>
<keyword id="KW-0813">Transport</keyword>
<keyword id="KW-0862">Zinc</keyword>
<keyword id="KW-0863">Zinc-finger</keyword>
<protein>
    <recommendedName>
        <fullName>B box and SPRY domain-containing protein</fullName>
    </recommendedName>
</protein>
<sequence length="402" mass="44381">MSAEGAEPGPGSGSGPGPGPLCPEHGQALSWFCGSERRPVCAACAGLGGRCRGHRIRRAEERAEELRNKIVDQCERLQLQSAAITKYVADVLPGKNQRAVSMASAARELVIQRLSLVRSLCESEEQRLLEQVHGEEERAHQSILTQRVHWAEALQKLDTIRTGLVGMLTHLDDLQLIQKEQEIFERTEEAEGILDPQESEMLNFNEKCTRSPLLTQLWATAVLGSLSGTEDIRIDERTVSPFLQLSDDRKTLTFSTKKSKACADGPERFDHWPNALAATSFQNGLHAWMVNVQNSCAYKVGVASGHLPRKGSGSDCRLGHNAFSWVFSRYDQEFRFSHNGQHEPLGLLRGPAQLGVVLDLQVQELLFYEPASGTVLCAHHVSFPGPLFPVFAVADQTISIVR</sequence>
<evidence type="ECO:0000250" key="1"/>
<evidence type="ECO:0000255" key="2">
    <source>
        <dbReference type="PROSITE-ProRule" id="PRU00548"/>
    </source>
</evidence>
<evidence type="ECO:0000256" key="3">
    <source>
        <dbReference type="SAM" id="MobiDB-lite"/>
    </source>
</evidence>
<evidence type="ECO:0000269" key="4">
    <source>
    </source>
</evidence>
<evidence type="ECO:0000269" key="5">
    <source>
    </source>
</evidence>
<evidence type="ECO:0000303" key="6">
    <source>
    </source>
</evidence>
<evidence type="ECO:0000305" key="7"/>
<organism>
    <name type="scientific">Homo sapiens</name>
    <name type="common">Human</name>
    <dbReference type="NCBI Taxonomy" id="9606"/>
    <lineage>
        <taxon>Eukaryota</taxon>
        <taxon>Metazoa</taxon>
        <taxon>Chordata</taxon>
        <taxon>Craniata</taxon>
        <taxon>Vertebrata</taxon>
        <taxon>Euteleostomi</taxon>
        <taxon>Mammalia</taxon>
        <taxon>Eutheria</taxon>
        <taxon>Euarchontoglires</taxon>
        <taxon>Primates</taxon>
        <taxon>Haplorrhini</taxon>
        <taxon>Catarrhini</taxon>
        <taxon>Hominidae</taxon>
        <taxon>Homo</taxon>
    </lineage>
</organism>
<feature type="chain" id="PRO_0000244257" description="B box and SPRY domain-containing protein">
    <location>
        <begin position="1"/>
        <end position="402"/>
    </location>
</feature>
<feature type="domain" description="B30.2/SPRY" evidence="2">
    <location>
        <begin position="212"/>
        <end position="402"/>
    </location>
</feature>
<feature type="zinc finger region" description="B box-type">
    <location>
        <begin position="17"/>
        <end position="65"/>
    </location>
</feature>
<feature type="region of interest" description="Disordered" evidence="3">
    <location>
        <begin position="1"/>
        <end position="20"/>
    </location>
</feature>
<feature type="splice variant" id="VSP_019527" description="In isoform 2." evidence="6">
    <original>TEEAEGI</original>
    <variation>HRGHTDR</variation>
    <location>
        <begin position="187"/>
        <end position="193"/>
    </location>
</feature>
<feature type="splice variant" id="VSP_019528" description="In isoform 2." evidence="6">
    <location>
        <begin position="194"/>
        <end position="402"/>
    </location>
</feature>
<feature type="sequence variant" id="VAR_048397" description="In dbSNP:rs34089316.">
    <original>A</original>
    <variation>P</variation>
    <location>
        <position position="261"/>
    </location>
</feature>
<feature type="sequence variant" id="VAR_026882" description="In dbSNP:rs818711.">
    <original>Q</original>
    <variation>H</variation>
    <location>
        <position position="293"/>
    </location>
</feature>
<feature type="sequence variant" id="VAR_026883" description="In dbSNP:rs3088235." evidence="4 5">
    <original>T</original>
    <variation>I</variation>
    <location>
        <position position="374"/>
    </location>
</feature>
<feature type="sequence conflict" description="In Ref. 5; BAA90980." evidence="7" ref="5">
    <original>V</original>
    <variation>E</variation>
    <location>
        <position position="100"/>
    </location>
</feature>
<accession>Q5W0U4</accession>
<accession>B3KS19</accession>
<accession>Q96DJ2</accession>
<accession>Q9H4E4</accession>
<accession>Q9NXN0</accession>
<gene>
    <name type="primary">BSPRY</name>
</gene>
<name>BSPRY_HUMAN</name>
<proteinExistence type="evidence at protein level"/>